<proteinExistence type="inferred from homology"/>
<evidence type="ECO:0000255" key="1">
    <source>
        <dbReference type="HAMAP-Rule" id="MF_01126"/>
    </source>
</evidence>
<protein>
    <recommendedName>
        <fullName evidence="1">UPF0298 protein SSU98_1559</fullName>
    </recommendedName>
</protein>
<gene>
    <name type="ordered locus">SSU98_1559</name>
</gene>
<feature type="chain" id="PRO_1000065373" description="UPF0298 protein SSU98_1559">
    <location>
        <begin position="1"/>
        <end position="90"/>
    </location>
</feature>
<keyword id="KW-0963">Cytoplasm</keyword>
<name>Y1559_STRS2</name>
<sequence>MFEKKNRTCLTVYLHYNRDARKLSQYGDIVYHSKRLRYVLVYMDQELVEATILKLKKERFVKKVVPSYIKELDQNFVGNLWRDEEPSVVG</sequence>
<comment type="subcellular location">
    <subcellularLocation>
        <location evidence="1">Cytoplasm</location>
    </subcellularLocation>
</comment>
<comment type="similarity">
    <text evidence="1">Belongs to the UPF0298 family.</text>
</comment>
<reference key="1">
    <citation type="journal article" date="2007" name="PLoS ONE">
        <title>A glimpse of streptococcal toxic shock syndrome from comparative genomics of S. suis 2 Chinese isolates.</title>
        <authorList>
            <person name="Chen C."/>
            <person name="Tang J."/>
            <person name="Dong W."/>
            <person name="Wang C."/>
            <person name="Feng Y."/>
            <person name="Wang J."/>
            <person name="Zheng F."/>
            <person name="Pan X."/>
            <person name="Liu D."/>
            <person name="Li M."/>
            <person name="Song Y."/>
            <person name="Zhu X."/>
            <person name="Sun H."/>
            <person name="Feng T."/>
            <person name="Guo Z."/>
            <person name="Ju A."/>
            <person name="Ge J."/>
            <person name="Dong Y."/>
            <person name="Sun W."/>
            <person name="Jiang Y."/>
            <person name="Wang J."/>
            <person name="Yan J."/>
            <person name="Yang H."/>
            <person name="Wang X."/>
            <person name="Gao G.F."/>
            <person name="Yang R."/>
            <person name="Wang J."/>
            <person name="Yu J."/>
        </authorList>
    </citation>
    <scope>NUCLEOTIDE SEQUENCE [LARGE SCALE GENOMIC DNA]</scope>
    <source>
        <strain>98HAH33</strain>
    </source>
</reference>
<accession>A4W2X8</accession>
<dbReference type="EMBL" id="CP000408">
    <property type="protein sequence ID" value="ABP92717.1"/>
    <property type="molecule type" value="Genomic_DNA"/>
</dbReference>
<dbReference type="SMR" id="A4W2X8"/>
<dbReference type="KEGG" id="ssv:SSU98_1559"/>
<dbReference type="HOGENOM" id="CLU_159890_1_0_9"/>
<dbReference type="BioCyc" id="SSUI391296:GI2E-1615-MONOMER"/>
<dbReference type="GO" id="GO:0005737">
    <property type="term" value="C:cytoplasm"/>
    <property type="evidence" value="ECO:0007669"/>
    <property type="project" value="UniProtKB-SubCell"/>
</dbReference>
<dbReference type="HAMAP" id="MF_01126">
    <property type="entry name" value="UPF0298"/>
    <property type="match status" value="1"/>
</dbReference>
<dbReference type="InterPro" id="IPR016979">
    <property type="entry name" value="DUF2129"/>
</dbReference>
<dbReference type="NCBIfam" id="NF002631">
    <property type="entry name" value="PRK02302.1"/>
    <property type="match status" value="1"/>
</dbReference>
<dbReference type="Pfam" id="PF09902">
    <property type="entry name" value="DUF2129"/>
    <property type="match status" value="1"/>
</dbReference>
<dbReference type="PIRSF" id="PIRSF031653">
    <property type="entry name" value="UCP031653"/>
    <property type="match status" value="1"/>
</dbReference>
<organism>
    <name type="scientific">Streptococcus suis (strain 98HAH33)</name>
    <dbReference type="NCBI Taxonomy" id="391296"/>
    <lineage>
        <taxon>Bacteria</taxon>
        <taxon>Bacillati</taxon>
        <taxon>Bacillota</taxon>
        <taxon>Bacilli</taxon>
        <taxon>Lactobacillales</taxon>
        <taxon>Streptococcaceae</taxon>
        <taxon>Streptococcus</taxon>
    </lineage>
</organism>